<proteinExistence type="inferred from homology"/>
<keyword id="KW-0227">DNA damage</keyword>
<keyword id="KW-0233">DNA recombination</keyword>
<keyword id="KW-0234">DNA repair</keyword>
<keyword id="KW-0479">Metal-binding</keyword>
<keyword id="KW-0862">Zinc</keyword>
<keyword id="KW-0863">Zinc-finger</keyword>
<name>RECR_ENDTX</name>
<sequence length="198" mass="21905">MNRPRPVEKMVGIIKKLPGVGHKMAERLSYHILKMPQVEVDRLIDSIQNARRTMKCCSICCNLSEHDPCPICSDVTREKNIVCVVETPQDLIAVSKVEDYKGLYFVLGGALSPLDAVGPDDIRIDKLIKRLKRDSINEVIIATDADSKGEITAVYLADIIKILGIKVTRLGYGLPVGGDIEYADEITISRAIAGRKEM</sequence>
<accession>B1GZS8</accession>
<dbReference type="EMBL" id="AP009510">
    <property type="protein sequence ID" value="BAG13760.1"/>
    <property type="molecule type" value="Genomic_DNA"/>
</dbReference>
<dbReference type="RefSeq" id="WP_015423287.1">
    <property type="nucleotide sequence ID" value="NC_020419.1"/>
</dbReference>
<dbReference type="SMR" id="B1GZS8"/>
<dbReference type="STRING" id="471821.TGRD_277"/>
<dbReference type="KEGG" id="eti:RSTT_251"/>
<dbReference type="KEGG" id="rsd:TGRD_277"/>
<dbReference type="PATRIC" id="fig|471821.5.peg.422"/>
<dbReference type="HOGENOM" id="CLU_060739_1_0_0"/>
<dbReference type="OrthoDB" id="9802672at2"/>
<dbReference type="Proteomes" id="UP000001691">
    <property type="component" value="Chromosome"/>
</dbReference>
<dbReference type="GO" id="GO:0003677">
    <property type="term" value="F:DNA binding"/>
    <property type="evidence" value="ECO:0007669"/>
    <property type="project" value="UniProtKB-UniRule"/>
</dbReference>
<dbReference type="GO" id="GO:0008270">
    <property type="term" value="F:zinc ion binding"/>
    <property type="evidence" value="ECO:0007669"/>
    <property type="project" value="UniProtKB-KW"/>
</dbReference>
<dbReference type="GO" id="GO:0006310">
    <property type="term" value="P:DNA recombination"/>
    <property type="evidence" value="ECO:0007669"/>
    <property type="project" value="UniProtKB-UniRule"/>
</dbReference>
<dbReference type="GO" id="GO:0006281">
    <property type="term" value="P:DNA repair"/>
    <property type="evidence" value="ECO:0007669"/>
    <property type="project" value="UniProtKB-UniRule"/>
</dbReference>
<dbReference type="CDD" id="cd01025">
    <property type="entry name" value="TOPRIM_recR"/>
    <property type="match status" value="1"/>
</dbReference>
<dbReference type="Gene3D" id="3.30.60.80">
    <property type="match status" value="1"/>
</dbReference>
<dbReference type="Gene3D" id="3.40.1360.10">
    <property type="match status" value="1"/>
</dbReference>
<dbReference type="Gene3D" id="6.10.250.240">
    <property type="match status" value="1"/>
</dbReference>
<dbReference type="Gene3D" id="1.10.8.420">
    <property type="entry name" value="RecR Domain 1"/>
    <property type="match status" value="1"/>
</dbReference>
<dbReference type="HAMAP" id="MF_00017">
    <property type="entry name" value="RecR"/>
    <property type="match status" value="1"/>
</dbReference>
<dbReference type="InterPro" id="IPR000093">
    <property type="entry name" value="DNA_Rcmb_RecR"/>
</dbReference>
<dbReference type="InterPro" id="IPR023627">
    <property type="entry name" value="Rcmb_RecR"/>
</dbReference>
<dbReference type="InterPro" id="IPR015967">
    <property type="entry name" value="Rcmb_RecR_Znf"/>
</dbReference>
<dbReference type="InterPro" id="IPR006171">
    <property type="entry name" value="TOPRIM_dom"/>
</dbReference>
<dbReference type="InterPro" id="IPR034137">
    <property type="entry name" value="TOPRIM_RecR"/>
</dbReference>
<dbReference type="NCBIfam" id="TIGR00615">
    <property type="entry name" value="recR"/>
    <property type="match status" value="1"/>
</dbReference>
<dbReference type="PANTHER" id="PTHR30446">
    <property type="entry name" value="RECOMBINATION PROTEIN RECR"/>
    <property type="match status" value="1"/>
</dbReference>
<dbReference type="PANTHER" id="PTHR30446:SF0">
    <property type="entry name" value="RECOMBINATION PROTEIN RECR"/>
    <property type="match status" value="1"/>
</dbReference>
<dbReference type="Pfam" id="PF21175">
    <property type="entry name" value="RecR_C"/>
    <property type="match status" value="1"/>
</dbReference>
<dbReference type="Pfam" id="PF21176">
    <property type="entry name" value="RecR_HhH"/>
    <property type="match status" value="1"/>
</dbReference>
<dbReference type="Pfam" id="PF02132">
    <property type="entry name" value="RecR_ZnF"/>
    <property type="match status" value="1"/>
</dbReference>
<dbReference type="Pfam" id="PF13662">
    <property type="entry name" value="Toprim_4"/>
    <property type="match status" value="1"/>
</dbReference>
<dbReference type="SMART" id="SM00493">
    <property type="entry name" value="TOPRIM"/>
    <property type="match status" value="1"/>
</dbReference>
<dbReference type="SUPFAM" id="SSF111304">
    <property type="entry name" value="Recombination protein RecR"/>
    <property type="match status" value="1"/>
</dbReference>
<dbReference type="PROSITE" id="PS50880">
    <property type="entry name" value="TOPRIM"/>
    <property type="match status" value="1"/>
</dbReference>
<organism>
    <name type="scientific">Endomicrobium trichonymphae</name>
    <dbReference type="NCBI Taxonomy" id="1408204"/>
    <lineage>
        <taxon>Bacteria</taxon>
        <taxon>Pseudomonadati</taxon>
        <taxon>Elusimicrobiota</taxon>
        <taxon>Endomicrobiia</taxon>
        <taxon>Endomicrobiales</taxon>
        <taxon>Endomicrobiaceae</taxon>
        <taxon>Candidatus Endomicrobiellum</taxon>
    </lineage>
</organism>
<gene>
    <name evidence="1" type="primary">recR</name>
    <name type="ordered locus">TGRD_277</name>
</gene>
<comment type="function">
    <text evidence="1">May play a role in DNA repair. It seems to be involved in an RecBC-independent recombinational process of DNA repair. It may act with RecF and RecO.</text>
</comment>
<comment type="similarity">
    <text evidence="1">Belongs to the RecR family.</text>
</comment>
<reference key="1">
    <citation type="journal article" date="2008" name="Proc. Natl. Acad. Sci. U.S.A.">
        <title>Complete genome of the uncultured termite group 1 bacteria in a single host protist cell.</title>
        <authorList>
            <person name="Hongoh Y."/>
            <person name="Sharma V.K."/>
            <person name="Prakash T."/>
            <person name="Noda S."/>
            <person name="Taylor T.D."/>
            <person name="Kudo T."/>
            <person name="Sakaki Y."/>
            <person name="Toyoda A."/>
            <person name="Hattori M."/>
            <person name="Ohkuma M."/>
        </authorList>
    </citation>
    <scope>NUCLEOTIDE SEQUENCE [LARGE SCALE GENOMIC DNA]</scope>
</reference>
<evidence type="ECO:0000255" key="1">
    <source>
        <dbReference type="HAMAP-Rule" id="MF_00017"/>
    </source>
</evidence>
<protein>
    <recommendedName>
        <fullName evidence="1">Recombination protein RecR</fullName>
    </recommendedName>
</protein>
<feature type="chain" id="PRO_1000195417" description="Recombination protein RecR">
    <location>
        <begin position="1"/>
        <end position="198"/>
    </location>
</feature>
<feature type="domain" description="Toprim" evidence="1">
    <location>
        <begin position="80"/>
        <end position="175"/>
    </location>
</feature>
<feature type="zinc finger region" description="C4-type" evidence="1">
    <location>
        <begin position="57"/>
        <end position="72"/>
    </location>
</feature>